<protein>
    <recommendedName>
        <fullName evidence="1">Ribonuclease 3</fullName>
        <ecNumber evidence="1">3.1.26.3</ecNumber>
    </recommendedName>
    <alternativeName>
        <fullName evidence="1">Ribonuclease III</fullName>
        <shortName evidence="1">RNase III</shortName>
    </alternativeName>
</protein>
<comment type="function">
    <text evidence="1">Digests double-stranded RNA. Involved in the processing of primary rRNA transcript to yield the immediate precursors to the large and small rRNAs (23S and 16S). Processes some mRNAs, and tRNAs when they are encoded in the rRNA operon. Processes pre-crRNA and tracrRNA of type II CRISPR loci if present in the organism.</text>
</comment>
<comment type="catalytic activity">
    <reaction evidence="1">
        <text>Endonucleolytic cleavage to 5'-phosphomonoester.</text>
        <dbReference type="EC" id="3.1.26.3"/>
    </reaction>
</comment>
<comment type="cofactor">
    <cofactor evidence="1">
        <name>Mg(2+)</name>
        <dbReference type="ChEBI" id="CHEBI:18420"/>
    </cofactor>
</comment>
<comment type="subunit">
    <text evidence="1">Homodimer.</text>
</comment>
<comment type="subcellular location">
    <subcellularLocation>
        <location evidence="1">Cytoplasm</location>
    </subcellularLocation>
</comment>
<comment type="similarity">
    <text evidence="1">Belongs to the ribonuclease III family.</text>
</comment>
<accession>B8D951</accession>
<proteinExistence type="inferred from homology"/>
<reference key="1">
    <citation type="journal article" date="2009" name="Science">
        <title>The dynamics and time scale of ongoing genomic erosion in symbiotic bacteria.</title>
        <authorList>
            <person name="Moran N.A."/>
            <person name="McLaughlin H.J."/>
            <person name="Sorek R."/>
        </authorList>
    </citation>
    <scope>NUCLEOTIDE SEQUENCE [LARGE SCALE GENOMIC DNA]</scope>
    <source>
        <strain>5A</strain>
    </source>
</reference>
<gene>
    <name evidence="1" type="primary">rnc</name>
    <name type="ordered locus">BUAP5A_253</name>
</gene>
<sequence length="226" mass="25738">MNHIVTKKIQKVLGYTFTHKDLLKQALTHRSASSKHNERLEFLGDSILSFVIANALYQHFPYIDEGDMSRMRATLVRGNTLAEIAYEFDLGEYLKLGQGELKSGGFRRESILANTVEALIGSIYLDSNIKTVEELILKWYEKRLEKISPGDTQKDPKTRLQEYLQSKHLSLPLYFIVEVYGEAHNQLFTIHCKISTISEYLIGTGSSRRKAEQDAAQKALIKLGVE</sequence>
<feature type="chain" id="PRO_1000194414" description="Ribonuclease 3">
    <location>
        <begin position="1"/>
        <end position="226"/>
    </location>
</feature>
<feature type="domain" description="RNase III" evidence="1">
    <location>
        <begin position="6"/>
        <end position="128"/>
    </location>
</feature>
<feature type="domain" description="DRBM" evidence="1">
    <location>
        <begin position="155"/>
        <end position="225"/>
    </location>
</feature>
<feature type="active site" evidence="1">
    <location>
        <position position="45"/>
    </location>
</feature>
<feature type="active site" evidence="1">
    <location>
        <position position="117"/>
    </location>
</feature>
<feature type="binding site" evidence="1">
    <location>
        <position position="41"/>
    </location>
    <ligand>
        <name>Mg(2+)</name>
        <dbReference type="ChEBI" id="CHEBI:18420"/>
    </ligand>
</feature>
<feature type="binding site" evidence="1">
    <location>
        <position position="114"/>
    </location>
    <ligand>
        <name>Mg(2+)</name>
        <dbReference type="ChEBI" id="CHEBI:18420"/>
    </ligand>
</feature>
<feature type="binding site" evidence="1">
    <location>
        <position position="117"/>
    </location>
    <ligand>
        <name>Mg(2+)</name>
        <dbReference type="ChEBI" id="CHEBI:18420"/>
    </ligand>
</feature>
<keyword id="KW-0963">Cytoplasm</keyword>
<keyword id="KW-0255">Endonuclease</keyword>
<keyword id="KW-0378">Hydrolase</keyword>
<keyword id="KW-0460">Magnesium</keyword>
<keyword id="KW-0479">Metal-binding</keyword>
<keyword id="KW-0507">mRNA processing</keyword>
<keyword id="KW-0540">Nuclease</keyword>
<keyword id="KW-0694">RNA-binding</keyword>
<keyword id="KW-0698">rRNA processing</keyword>
<keyword id="KW-0699">rRNA-binding</keyword>
<keyword id="KW-0819">tRNA processing</keyword>
<evidence type="ECO:0000255" key="1">
    <source>
        <dbReference type="HAMAP-Rule" id="MF_00104"/>
    </source>
</evidence>
<organism>
    <name type="scientific">Buchnera aphidicola subsp. Acyrthosiphon pisum (strain 5A)</name>
    <dbReference type="NCBI Taxonomy" id="563178"/>
    <lineage>
        <taxon>Bacteria</taxon>
        <taxon>Pseudomonadati</taxon>
        <taxon>Pseudomonadota</taxon>
        <taxon>Gammaproteobacteria</taxon>
        <taxon>Enterobacterales</taxon>
        <taxon>Erwiniaceae</taxon>
        <taxon>Buchnera</taxon>
    </lineage>
</organism>
<dbReference type="EC" id="3.1.26.3" evidence="1"/>
<dbReference type="EMBL" id="CP001161">
    <property type="protein sequence ID" value="ACL30622.1"/>
    <property type="molecule type" value="Genomic_DNA"/>
</dbReference>
<dbReference type="RefSeq" id="WP_009874212.1">
    <property type="nucleotide sequence ID" value="NC_011833.1"/>
</dbReference>
<dbReference type="SMR" id="B8D951"/>
<dbReference type="KEGG" id="bap:BUAP5A_253"/>
<dbReference type="HOGENOM" id="CLU_000907_1_1_6"/>
<dbReference type="OrthoDB" id="9805026at2"/>
<dbReference type="Proteomes" id="UP000006904">
    <property type="component" value="Chromosome"/>
</dbReference>
<dbReference type="GO" id="GO:0005737">
    <property type="term" value="C:cytoplasm"/>
    <property type="evidence" value="ECO:0007669"/>
    <property type="project" value="UniProtKB-SubCell"/>
</dbReference>
<dbReference type="GO" id="GO:0003725">
    <property type="term" value="F:double-stranded RNA binding"/>
    <property type="evidence" value="ECO:0007669"/>
    <property type="project" value="TreeGrafter"/>
</dbReference>
<dbReference type="GO" id="GO:0046872">
    <property type="term" value="F:metal ion binding"/>
    <property type="evidence" value="ECO:0007669"/>
    <property type="project" value="UniProtKB-KW"/>
</dbReference>
<dbReference type="GO" id="GO:0004525">
    <property type="term" value="F:ribonuclease III activity"/>
    <property type="evidence" value="ECO:0007669"/>
    <property type="project" value="UniProtKB-UniRule"/>
</dbReference>
<dbReference type="GO" id="GO:0019843">
    <property type="term" value="F:rRNA binding"/>
    <property type="evidence" value="ECO:0007669"/>
    <property type="project" value="UniProtKB-KW"/>
</dbReference>
<dbReference type="GO" id="GO:0006397">
    <property type="term" value="P:mRNA processing"/>
    <property type="evidence" value="ECO:0007669"/>
    <property type="project" value="UniProtKB-UniRule"/>
</dbReference>
<dbReference type="GO" id="GO:0010468">
    <property type="term" value="P:regulation of gene expression"/>
    <property type="evidence" value="ECO:0007669"/>
    <property type="project" value="TreeGrafter"/>
</dbReference>
<dbReference type="GO" id="GO:0006364">
    <property type="term" value="P:rRNA processing"/>
    <property type="evidence" value="ECO:0007669"/>
    <property type="project" value="UniProtKB-UniRule"/>
</dbReference>
<dbReference type="GO" id="GO:0008033">
    <property type="term" value="P:tRNA processing"/>
    <property type="evidence" value="ECO:0007669"/>
    <property type="project" value="UniProtKB-KW"/>
</dbReference>
<dbReference type="CDD" id="cd10845">
    <property type="entry name" value="DSRM_RNAse_III_family"/>
    <property type="match status" value="1"/>
</dbReference>
<dbReference type="CDD" id="cd00593">
    <property type="entry name" value="RIBOc"/>
    <property type="match status" value="1"/>
</dbReference>
<dbReference type="FunFam" id="1.10.1520.10:FF:000001">
    <property type="entry name" value="Ribonuclease 3"/>
    <property type="match status" value="1"/>
</dbReference>
<dbReference type="FunFam" id="3.30.160.20:FF:000003">
    <property type="entry name" value="Ribonuclease 3"/>
    <property type="match status" value="1"/>
</dbReference>
<dbReference type="Gene3D" id="3.30.160.20">
    <property type="match status" value="1"/>
</dbReference>
<dbReference type="Gene3D" id="1.10.1520.10">
    <property type="entry name" value="Ribonuclease III domain"/>
    <property type="match status" value="1"/>
</dbReference>
<dbReference type="HAMAP" id="MF_00104">
    <property type="entry name" value="RNase_III"/>
    <property type="match status" value="1"/>
</dbReference>
<dbReference type="InterPro" id="IPR014720">
    <property type="entry name" value="dsRBD_dom"/>
</dbReference>
<dbReference type="InterPro" id="IPR011907">
    <property type="entry name" value="RNase_III"/>
</dbReference>
<dbReference type="InterPro" id="IPR000999">
    <property type="entry name" value="RNase_III_dom"/>
</dbReference>
<dbReference type="InterPro" id="IPR036389">
    <property type="entry name" value="RNase_III_sf"/>
</dbReference>
<dbReference type="NCBIfam" id="TIGR02191">
    <property type="entry name" value="RNaseIII"/>
    <property type="match status" value="1"/>
</dbReference>
<dbReference type="PANTHER" id="PTHR11207:SF0">
    <property type="entry name" value="RIBONUCLEASE 3"/>
    <property type="match status" value="1"/>
</dbReference>
<dbReference type="PANTHER" id="PTHR11207">
    <property type="entry name" value="RIBONUCLEASE III"/>
    <property type="match status" value="1"/>
</dbReference>
<dbReference type="Pfam" id="PF00035">
    <property type="entry name" value="dsrm"/>
    <property type="match status" value="1"/>
</dbReference>
<dbReference type="Pfam" id="PF14622">
    <property type="entry name" value="Ribonucleas_3_3"/>
    <property type="match status" value="1"/>
</dbReference>
<dbReference type="SMART" id="SM00358">
    <property type="entry name" value="DSRM"/>
    <property type="match status" value="1"/>
</dbReference>
<dbReference type="SMART" id="SM00535">
    <property type="entry name" value="RIBOc"/>
    <property type="match status" value="1"/>
</dbReference>
<dbReference type="SUPFAM" id="SSF54768">
    <property type="entry name" value="dsRNA-binding domain-like"/>
    <property type="match status" value="1"/>
</dbReference>
<dbReference type="SUPFAM" id="SSF69065">
    <property type="entry name" value="RNase III domain-like"/>
    <property type="match status" value="1"/>
</dbReference>
<dbReference type="PROSITE" id="PS50137">
    <property type="entry name" value="DS_RBD"/>
    <property type="match status" value="1"/>
</dbReference>
<dbReference type="PROSITE" id="PS00517">
    <property type="entry name" value="RNASE_3_1"/>
    <property type="match status" value="1"/>
</dbReference>
<dbReference type="PROSITE" id="PS50142">
    <property type="entry name" value="RNASE_3_2"/>
    <property type="match status" value="1"/>
</dbReference>
<name>RNC_BUCA5</name>